<sequence>MNYRDKIQKFSIRKYTVGTFSTVIATLVFLGFNTSQAHAAETNQPASVVKQKQQSNNEQTENRESQVQNSQNSQNGQSLSATHENEQPNISQANLVDQKVAQSSTTNDEQPASQNVNTKKDSATAATTQPDKEQSKHKQNESQSANKNGNDNRAAHVENHEANVVTASDSSDNGNVQHDRNELQAFFDANYHDYRFIDRENADSGTFNYVKGIFDKINTLLGSNDPINNKDLQLAYKELEQAVALIRTMPQRQQTSRRSNRIQTRSVESRAAEPRSVSDYQNANSSYYVENANDGSGYPVGTYINASSKGAPYNLPTTPWNTLKASDSKEIALMTAKQTGDGYQWVIKFNKGHAPHQNMIFWFALPADQVPVGRTDFVTVNSDGTNVQWSHGAGAGANKPLQQMWEYGVNDPHRSHDFKIRNRSGQVIYDWPTVHIYSLEDLSRASDYFSEAGATPATKAFGRQNFEYINGQKPAESPGVPKVYTFIGQGDASYTISFKTQGPTVNKLYYAAGGRALEYNQLFMYSQLYVESTQDHQQRLNGLRQVVNRTYRIGTTKRVEVSQGNVQTKKVLESTNLNIDDFVDDPLSYVKTPSNKVLGFYSNNANTNAFRPGGAQQLNEYQLSQLFTDQKLQEAARTRNPIRLMIGFDYPDAYGNSETLVPVNLTVLPEIQHNIKFFKNDDTQNIAEKPFSKQAGHPVFYVYAGNQGNASVNLGGSVTSIQPLRINLTSNENFTDKDWQITGIPRTLHIENSTNRPNNARERNIELVGNLLPGDYFGTIRFGRKEQLFEIRVKPHTPTITTTAEQLRGTALQKVPVNISGIPLDPSALVYLVAPTNQTTNGGSEADQIPSGYTILATGTPDGVHNTITIRPQDYVVFIPPVGKQIRAVVYYNKVVASNMSNAVTILPDDIPPTINNPVGINAKYYRGDEVNFTMGVSDRHSGIKNTTITTLPNGWTSNLTKADKNNGSLSITGRVSMNQAFNSDITFKVSATDNVNNTTNDSQSKHVSIHVGKISEDAHPIVLGNTEKVVVVNPTAVSNDEKQSIITAFMNKNQNIRGYLASTDPVTVDNNGNVTLHYRDGSSTTLDATNVMTYEPVVKPEYQTVNAAKTATVTIAKGQSFSIGDIKQYFTLSNGQPIPSGTFTNITSDRTIPTAQEVSQMNAGTQLYHITATNAYHKDSEDFYISLKIIDVKQPEGDQRVYRTSTYDLTTDEISKVKQAFINANRDVITLAEGDISVTNTPNGANVSTITVNINKGRLTKSFASNLANMNFLRWVNFPQDYTVTWTNAKIANRPTDGGLSWSDDHKSLIYRYDATLGTQITTNDILTMLKATTTVPGLRNNITGNEKSQAEAGGRPNFRTTGYSQSNATTDGQRQFTLNGQVIQVLDIINPSNGYGGQPVTNSNTRANHSNSTVVNVNEPAANGAGAFTIDHVVKSNSTHNASDAVYKAQLYLTPYGPKQYVEHLNQNTGNTTDAINIYFVPSDLVNPTISVGNYTNHQVFSGETFTNTITANDNFGVQSVTVPNTSQITGTVDNNHQHVSATAPNVTSATNKTINLLATDTSGNTATTSFNVTVKPLRDKYRVGTSSTAANPVRIANISNNATVSQADQTTIINSLTFTETVPNRSYARASANEITSKTVSNVSRTGNNANVTVTVTYQDGTTSTVTVPVKHVIPEIVAHSHYTVQGQDFPAGNGSSASDYFKLSNGSDIADATITWVSGQAPNKDNTRIGEDITVTAHILIDGETTPITKTATYKVVRTVPKHVFETARGVLYPGVSDMYDAKQYVKPVNNSWSTNAQHMNFQFVGTYGPNKDVVGISTRLIRVTYDNRQTEDLTILSKVKPDPPRIDANSVTYKAGLTNQEIKVNNVLNNSSVKLFKADNTPLNVTNITHGSGFSSVVTVSDALPNGGIKAKSSISMNNVTYTTQDEHGQVVTVTRNESVDSNDSATVTVTPQLQATTEGAVFIKGGDGFDFGHVERFIQNPPHGATVAWHDSPDTWKNTVGNTHKTAVVTLPNGQGTRNVEVPVKVYPVANAKAPSRDVKGQNLTNGTDAMNYITFDPNTNTNGITAAWANRQQPNNQQAGVQHLNVDVTYPGISAAKRVPVTVNVYQFEFPQTTYTTTVGGTLASGTQASGYAHMQNATGLPTDGFTYKWNRDTTGTNDANWSAMNKPNVAKVVNAKYDVIYNGHTFATSLPAKFVVKDVQPAKPTVTETAAGAITIAPGANQTVNTHAGNVTTYADKLVIKRNGNVVTTFTRRNNTSPWVKEASAATVAGIAGTNNGITVAAGTFNPADTIQVVATQGSGETVSDEQRSDDFTVVAPQPNQATTKIWQNGHIDITPNNPSGHLINPTQAMDIAYTEKVGNGAEHSKTINVVRGQNNQWTIANKPDYVTLDAQTGKVTFNANTIKPNSSITITPKAGTGHSVSSNPSTLTAPAAHTVNTTEIVKDYGSNVTAAEINNAVQVANKRTATIKNGTAMPTNLAGGSTTTIPVTVTYNDGSTEEVQESIFTKADKRELITAKNHLDDPVSTEGKKPGTITQYNNAMHNAQQQINTAKTEAQQVINNERATPQQVSDALTKVRAAQTKIDQAKALLQNKEDNSQLVTSKNNLQSSVNQVPSTAGMTQQSIDNYNAKKREAETEITAAQRVIDNGDATAQQISDEKHRVDNALTALNQAKHDLTADTHALEQAVQQLNRTGTTTGKKPASITAYNNSIRALQSDLTSAKNSANAIIQKPIRTVQEVQSALTNVNRVNERLTQAINQLVPLADNSALKTAKTKLDEEINKSVTTDGMTQSSIQAYENAKRAGQTESTNAQNVINNGDATDQQIAAEKTKVEEKYNSLKQAIAGLTPDLAPLQTAKTQLQNDIDQPTSTTGMTSASIAAFNEKLSAARTKIQEIDRVLASHPDVATIRQNVTAANAAKSALDQARNGLTVDKAPLENAKNQLQYSIDTQTSTTGMTQDSINAYNAKLTAARNKIQQINQVLAGSPTVEQINTNTSTANQAKSDLDHARQALTPDKAPLQTAKTQLEQSINQPTDTTGMTTASLNAYNQKLQAARQKLTEINQVLNGNPTVQNINDKVTEANQAKDQLNTARQGLTLDRQPALTTLHGASNLNQAQQNNFTQQINAAQNHAALETIKSNITALNTAMTKLKDSVADNNTIKSDQNYTDATPANKQAYDNAVNAAKGVIGETTNPTMDVNTVNQKAASVKSTKDALDGQQNLQRAKTEATNAITHASDLNQAQKNALTQQVNSAQNVQAVNDIKQTTQSLNTAMTGLKRGVANHNQVVQSDNYVNADTNKKNDYNNAYNHANDIINGNAQHPVITPSDVNNALSNVTSKEHALNGEAKLNAAKQEANTALGHLNNLNNAQRQNLQSQINGAHQIDAVNTIKQNATNLNSAMGNLRQAVADKDQVKRTEDYADADTAKQNAYNSAVSSAETIINQTTNPTMSVDDVNRATSAVTSNKNALNGYEKLAQSKTDAARAIDALPHLNNAQKADVKSKINAASNIAGVNTVKQQGTDLNTAMGNLQGAINDEQTTLNSQNYQDATPSKKTAYTNAVQAAKDILNKSNGQNKTKDQVTEAMNQVNSAKNNLDGTRLLDQAKQTAKQQLNNMTHLTTAQKTNLTNQINSGTTVAGVQTVQSNANTLDQAMNTLRQSIANKDATKASEDYVDANNDKQTAYNNAVAAAETIINANSNPEMNPSTITQKAEQVNSSKTALNGDENLAAAKQNAKTYLNTLTSITDAQKNNLISQITSATRVSGVDTVKQNAQHLDQAMASLQNGINNESQVKSSEKYRDADTNKQQEYDNAITAAKAILNKSTGPNTAQNAVEAALQRVNNAKDALNGDAKLIAAQNAAKQHLGTLTHITTAQRNDLTNQISQATNLAGVESVKQNANSLDGAMGNLQTAINDKSGTLASQNFLDADEQKRNAYNQAVSAAETILNKQTGPNTAKTAVEQALNNVNNAKHALNGTQNLNNAKQAAITAINGASDLNQKQKDALKAQANGAQRVSNAQDVQHNATELNTAMGTLKHAIADKTNTLASSKYVNADSTKQNAYTTKVTNAEHIISGTPTVVTTPSEVTAAANQVNSAKQELNGDERLREAKQNANTAIDALTQLNTPQKAKLKEQVGQANRLEDVQTVQTNGQALNNAMKGLRDSIANETTVKTSQNYTDASPNNQSTYNSAVSNAKGIINQTNNPTMDTSAITQATTQVNNAKNGLNGAENLRNAQNTAKQNLNTLSHLTNNQKSAISSQIDRAGHVSEVTATKNAATELNTQMGNLEQAIHDQNTVKQSVKFTDADKAKRDAYTNAVSRAEAILNKTQGANTSKQDVEAAIQNVSSAKNALNGDQNVTNAKNAAKNALNNLTSINNAQKRDLTTKIDQATTVAGVEAVSNTSTQLNTAMANLQNGINDKTNTLASENYHDADSDKKTAYTQAVTNAENILNKNSGSNLDKTAVENALSQVANAKGALNGNHNLEQAKSNANTTINGLQHLTTAQKDKLKQQVQQAQNVAGVDTVKSSANTLNGAMGTLRNSIQDNTATKNGQNYLDATERNKTNYNNAVDSANGVINATSNPNMDANAINQIATQVTSTKNALDGTHNLTQAKQTATNAIDGATNLNKAQKDALKAQVTSAQRVANVTSIQQTANELNTAMGQLQHGIDDENATKQTQKYRDAEQSKKTAYDQAVAAAKAILNKQTGSNSDKAAVDRALQQVTSTKDALNGDAKLAEAKAAAKQNLGTLNHITNAQRTDLEGQNNQATTVDGVNTVKTNANTLDGAMNSLQGSINDKDATLRNQNYLDADESKRNAYTQAVTAAEGILNKQTGGNTSKADVDNALNAVTRAKAALNGADNLRNAKTSATNTIDGLPNLTQLQKDNLKHQVEQAQNVAGVNGVKDKGNTLNTAMGALRTSIQNDNTTKTSQNYLDASDSNKNNYNTAVNNANGVINATNNPNMDANAINGMANQVNTTKAALNGAQNLAQAKTNATNTINNAHDLNQKQKDALKTQVNNAQRVSDANNVQHTATELNSAMTALKAAIADKERTKASGNYVNADQEKRQAYDSKVTNAENIISGTPNATLTVNDVNSAASQVNAAKTALNGDNNLRVAKEHANNTIDGLAQLNNAQKAKLKEQVQSATTLDGVQTVKNSSQTLNTAMKGLRDSIANEATIKAGQNYTDASPNNRNEYDSAVTAAKAIINQTSNPTMEPNTITQVTSQVTTKEQALNGARNLAQAKTTAKNNLNNLTSINNAQKDALTRSIDGATTVAGVNQETAKATELNNAMHSLQNGINDETQTKQTQKYLDAEPSKKSAYDQAVNAAKAILTKASGQNVDKAAVEQALQNVNSTKTALNGDAKLNEAKAAAKQTLGTLTHINNAQRTALDNEITQATNVEGVNTVKAKAQQLDGAMGQLETSIRDKDTTLQSQNYQDADDAKRTAYSQAVNAAATILNKTAGGNTPKADVERAMQAVTQANTALNGIQNLDRAKQAANTAITNASDLNTKQKEALKAQVTSAGRVSAANGVEHTATELNTAMTALKRAIADKAETKASGNYVNADANKRQAYDEKVTAAENIVSGTPTPTLTPADVTNAATQVTNAKTQLNGNHNLEVAKQNANTAIDGLTSLNGPQKAKLKEQVGQATTLPNVQTVRDNAQTLNTAMKGLRDSIANEATIKAGQNYTDASQNKQTDYNSAVTAAKAIIGQTTSPSMNAQEINQAKDQVTAKQQALNGQENLRTAQTNAKQHLNGLSDLTDAQKDAVKRQIEGATHVNEVTQAQNNADALNTAMTNLKNGIQDQNTIKQGVNFTDADEAKRNAYTNAVTQAEQILNKAQGPNTSKDGVETALENVQRAKNELNGNQNVANAKTTAKNALNNLTSINNAQKEALKSQIEGATTVAGVNQVSTTASELNTAMSNLQNGINDEAATKAAQKYTDADREKQTAYNDAVTAAKTLLDKTAGSNDNKAAVEQALQRVNTAKTALNGDERLNEAKNTAKQQVATMSHLTDAQKANLTSQIESGTTVAGVQGIQANAGTLDQAMNQLRQSIASKDATKSSEDYQDANADLQNAYNDAVTNAEGIISATNNPEMNPDTINQKASQVNSAKSALNGDEKLAAAKQTAKSDIGRLTDLNNAQRTAANAEVDQAPNLAAVTAAKNKATSLNTAMGNLKHALAEKDNTKRSVNYTDADQPKQQAYDTAVTQAEAITNANGSNANETQVQAALNQLNQAKNDLNGDNKVAQAKESAKRALASYSNLNNAQSTAATSQIDNATTVAGVTAAQNTANELNTAMGQLQNGINDQNTVKQQVNFTDADQGKKDAYTNAVTNAQGILDKAHGQNMTKAQVEAALNQVTTAKNALNGDANVRQAKSDAKANLGTLTHLNNAQKQDLTSQIEGATTVNGVNGVKTKAQDLDGAMQRLQSAIANKDQTKASENYIDADPTKKTAFDNAITQAESYLNKDHGANKDKQAVEQAIQSVTSTENALNGDANLQRAKTEAIQAIDNLTHLNTPQKTALKQQVNAAQRVSGVTDLKNSATSLNNAMDQLKQAIADHDTIVASGNYTNASPDKQGAYTDAYNAAKNIVNGSPNVITNAADVTAATQRVNNAETGLNGDTNLATAKQQAKDALRQMTHLSDAQKQSITGQIDSATQVTGVQSVKDNATNLDNAMNQLRNSIANKDDVKASQPYVDADRDKQNAYNTAVTNAENIINATSQPTLDPSAVTQAANQVSTNKTALNGAQNLANKKQETTANINQLSHLNNAQKQDLNTQVTNAPNISTVNQVKTKAEQLDQAMERLINGIQDKDQVKQSVNFTDADPEKQTAYNNAVTAAENIINQANGTNANQSQVEAALSTVTTTKQALNGDRKVTDAKNNANQTLSTLDNLNNAQKGAVTGNINQAHTVAEVTQAIQTAQELNTAMGNLKNSLNDKDTTLGSQNFADADPEKKNAYNEAVHNAENILNKSTGTNVPKDQVEAAMNQVNATKAALNGTQNLEKAKQHANTAIDGLSHLTNAQKEALKQLVQQSTTVAEAQGNEQKANNVDAAMDKLRQSIADNATTKQNQNYTDASQNKKDAYNNAVTTAQGIIDQTTSPTLDPTVINQAAGQVSTTKNALNGNENLEAAKQQASQSLGSLDNLNNAQKQTVTDQINGAHTVDEANQIKQNAQNLNTAMGNLKQAIADKDATKATVNFTDADQAKQQAYNTAVTNAENIISKANGGNATQAEVEQAIKQVNAAKQALNGNANVQHAKDEATALINSSNDLNQAQKDALKQQVQNATTVAGVNNVKQTAQELNNAMTQLKQGIADKEQTKADGNFVNADPDKQNAYNQAVAKAEALISATPDVVVTPSEITAALNKVTQAKNDLNGNTNLATAKQNVQHAIDQLPNLNQAQRDEYSKQITQATLVPNVNAIQQAATTLNDAMTQLKQGIANKAQIKGSENYHDADTDKQTAYDNAVTKAEELLKQTTNPTMDPNTIQQALTKVNDTNQALNGNQKLADAKQDAKTTLGTLDHLNDAQKQALTTQVEQAPDIATVNNVKQNAQNLNNAMTNLNNALQDKTETLNSINFTDADQAKKDAYTNAVSHAEGILSKANGSNASQTEVEQAMQRVNEAKQALNGNDNVQRAKDAAKQVITNANDLNQAQKDALKQQVDAAQTVANVNTIKQTAQDLNQAMTQLKQGIADKDQTKANGNFVNADTDKQNAYNNAVAHAEQIISGTPNANVDPQQVAQALQQVNQAKGDLNGNHNLQVAKDNANTAIDQLPNLNQPQKTALKDQVSHAELVTGVNAIKQNADALNNAMGTLKQQIQANSQVPQSVDFTQADQDKQQAYNNAANQAQQIANGIPTPVLTPDTVTQAVTTMNQAKDALNGDEKLAQAKQEALANLDTLRDLNQPQRDALRNQINQAQALATVEQTKQNAQNVNTAMSNLKQGIANKDTVKASENYHDADADKQTAYTNAVSQAEGIINQTTNPTLNPDEITRALTQVTDAKNGLNGEAKLATEKQNAKDAVSGMTHLNDAQKQALKGQIDQSPEIATVNQVKQTATSLDQAMDQLSQAINDKAQTLADGNYLNADPDKQNAYKQAVAKAEALLNKQSGTNEVQAQVESITNEVNAAKQALNGNDNLANAKQQAKQQLANLTHLNDAQKQSFESQITQAPLVTDVTTINQKAQTLDHAMELLRNSVADNQTTLASEDYHDATAQRQNDYNQAVTAANNIINQTTSPTMNPDDVNGATTQVNNTKVALDGDENLAAAKQQANNRLDQLDHLNNAQKQQLQSQITQSSDIAAVNGHKQTAESLNTAMGNLINAIADHQAVEQRGNFINADTDKQTAYNTAVNEAAAMINKQTGQNANQTEVEQAITKVQTTLQALNGDHNLQVAKTNATQAIDALTSLNDPQKTALKDQVTAATLVTAVHQIEQNANTLNQAMHGLRQSIQDNAATKANSKYINEDQPEQQNYDQAVQAANNIINEQTATLDNNAINQAATTVNTTKAALHGDVKLQNDKDHAKQTVSQLAHLNNAQKHMEDTLIDSETTRTAVKQDLTEAQALDQLMDALQQSIADKDATRASSAYVNAEPNKKQSYDEAVQNAESIIAGLNNPTINKGNVSSATQAVISSKNALDGVERLAQDKQTAGNSLNHLDQLTPAQQQALENQINNATTRGEVAQKLTEAQALNQAMEALRNSIQDQQQTEAGSKFINEDKPQKDAYQAAVQNAKDLINQTNNPTLDKAQVEQLTQAVNQAKDNLHGDQKLADDKQHAVTDLNQLNGLNNPQRQALESQINNAATRGEVAQKLAEAKALDQAMQALRNSIQDQQQTESGSKFINEDKPQKDAYQAAVQNAKDLINQTGNPTLDKSQVEQLTQAVTTAKDNLHGDQKLARDQQQAVTTVNALPNLNHAQQQALTDAINAAPTRTEVAQHVQTATELDHAMETLKNKVDQVNTDKAQPNYTEASTDKKEAVDQALQAAESITDPTNGSNANKDAVDQVLTKLQEKENELNGNERVAEAKTQAKQTIDQLTHLNADQIATAKQNIDQATKLQPIAELVDQATQLNQSMDQLQQAVNEHANVEQTVDYTQADSDKQNAYKQAIADAENVLKQNANKQQVDQALQNILNAKQALNGDERVALAKTNGKHDIDQLNALNNAQQDGFKGRIDQSNDLNQIQQIVDEAKALNRAMDQLSQEITDNEGRTKGSTNYVNADTQVKQVYDETVDKAKQALDKSTGQNLTAKQVIKLNDAVTAAKKALNGEERLNNRKAEALQRLDQLTHLNNAQRQLAIQQINNAETLNKASRAINRATKLDNAMGAVQQYIDEQHLGVISSTNYINADDNLKANYDNAIANAAHELDKVQGNAIAKAEAEQLKQNIIDAQNALNGDQNLANAKDKANAFVNSLNGLNQQQQDLAHKAINNADTVSDVTDIVNNQIDLNDAMETLKHLVDNEIPNAEQTVNYQNADDNAKTNFDDAKRLANTLLNSDNTNVNDINGAIQAVNDAIHNLNGDQRLQDAKDKAIQSINQALANKLKEIEASNATDQDKLIAKNKAEELANSIINNINKATSNQAVSQVQTAGNHAIEQVHANEIPKAKIDANKDVDKQVQALIDEIDRNPNLTDKEKQALKDRINQILQQGHNGINNAMTKEEIEQAKAQLAQALQDIKDLVKAKEDAKQDVDKQVQALIDEIDQNPNLTDKEKQALKDRINQILQQGHNDINNAMTKEAIEQAKERLAQALQDIKDLVKAKEDAKNDIDKRVQALIDEIDQNPNLTDKEKQALKDRINQILQQGHNDINNALTKEEIEQAKAQLAQALQDIKDLVKAKEDAKNAIKALANAKRDQINSNPDLTPEQKAKALKEIDEAEKRALQNVENAQTIDQLNRGLNLGLDDIRNTHVWEVDEQPAVNEIFEATPEQILVNGELIVHRDDIITEQDILAHINLIDQLSAEVIDTPSTATISDSLTAKVEVTLLDGSKVIVNVPVKVVEKELSVVKQQAIESIENAAQQKINEINNSVTLTLEQKEAAIAEVNKLKQQAIDHVNNAPDVHSVEEIQQQEQAHIEQFNPEQFTIEQAKSNAIKSIEDAIQHMIDEIKARTDLTDKEKQEAIAKLNQLKEQAIQAIQRAQSIDEISEQLEQFKAQMKAANPTAKELAKRKQEAISRIKDFSNEKINSIRNSEIGTADEKQAAMNQINEIVLETIRDINNAHTLQQVEAALNNGIARISAVQIVTSDRAKQSSSTGNESNSHLTIGYGTANHPFNSSTIGHKKKLDEDDDIDPLHMRHFSNNFGNVIKNAIGVVGISGLLASFWFFIAKRRRKEDEEEELEIRDNNKDSIKETLDDTKHLPLLFAKRRRKEDEEDVTVEEKDSLNNGESLDKVKHTPFFLPKRRRKEDEEDVEVTNENTDEKVLKDNEHSPLLFAKRRKDKEEDVETTTSIESKDEDVPLLLAKKKNQKDNQSKDKKSASKNTSKKVAAKKKKKKAKKNKK</sequence>
<accession>Q5HFY8</accession>
<feature type="signal peptide" evidence="1">
    <location>
        <begin position="1"/>
        <end position="39"/>
    </location>
</feature>
<feature type="chain" id="PRO_0000345973" description="Extracellular matrix-binding protein ebh">
    <location>
        <begin position="40"/>
        <end position="10498"/>
    </location>
</feature>
<feature type="transmembrane region" description="Helical" evidence="1">
    <location>
        <begin position="10304"/>
        <end position="10324"/>
    </location>
</feature>
<feature type="domain" description="FIVAR 1">
    <location>
        <begin position="2524"/>
        <end position="2580"/>
    </location>
</feature>
<feature type="domain" description="FIVAR 2">
    <location>
        <begin position="2610"/>
        <end position="2666"/>
    </location>
</feature>
<feature type="domain" description="FIVAR 3">
    <location>
        <begin position="2687"/>
        <end position="2750"/>
    </location>
</feature>
<feature type="domain" description="FIVAR 4">
    <location>
        <begin position="2780"/>
        <end position="2836"/>
    </location>
</feature>
<feature type="domain" description="FIVAR 5">
    <location>
        <begin position="2864"/>
        <end position="2919"/>
    </location>
</feature>
<feature type="domain" description="FIVAR 6">
    <location>
        <begin position="2947"/>
        <end position="3002"/>
    </location>
</feature>
<feature type="domain" description="FIVAR 7">
    <location>
        <begin position="3030"/>
        <end position="3085"/>
    </location>
</feature>
<feature type="domain" description="FIVAR 8">
    <location>
        <begin position="3154"/>
        <end position="3212"/>
    </location>
</feature>
<feature type="domain" description="FIVAR 9">
    <location>
        <begin position="3280"/>
        <end position="3339"/>
    </location>
</feature>
<feature type="domain" description="FIVAR 10">
    <location>
        <begin position="3407"/>
        <end position="3465"/>
    </location>
</feature>
<feature type="domain" description="FIVAR 11">
    <location>
        <begin position="3533"/>
        <end position="3591"/>
    </location>
</feature>
<feature type="domain" description="FIVAR 12">
    <location>
        <begin position="3659"/>
        <end position="3717"/>
    </location>
</feature>
<feature type="domain" description="FIVAR 13">
    <location>
        <begin position="3785"/>
        <end position="3843"/>
    </location>
</feature>
<feature type="domain" description="FIVAR 14">
    <location>
        <begin position="3911"/>
        <end position="3969"/>
    </location>
</feature>
<feature type="domain" description="FIVAR 15">
    <location>
        <begin position="4037"/>
        <end position="4095"/>
    </location>
</feature>
<feature type="domain" description="FIVAR 16">
    <location>
        <begin position="4163"/>
        <end position="4221"/>
    </location>
</feature>
<feature type="domain" description="FIVAR 17">
    <location>
        <begin position="4289"/>
        <end position="4347"/>
    </location>
</feature>
<feature type="domain" description="FIVAR 18">
    <location>
        <begin position="4415"/>
        <end position="4473"/>
    </location>
</feature>
<feature type="domain" description="FIVAR 19">
    <location>
        <begin position="4541"/>
        <end position="4599"/>
    </location>
</feature>
<feature type="domain" description="FIVAR 20">
    <location>
        <begin position="4667"/>
        <end position="4725"/>
    </location>
</feature>
<feature type="domain" description="FIVAR 21">
    <location>
        <begin position="4793"/>
        <end position="4851"/>
    </location>
</feature>
<feature type="domain" description="FIVAR 22">
    <location>
        <begin position="4919"/>
        <end position="4977"/>
    </location>
</feature>
<feature type="domain" description="FIVAR 23">
    <location>
        <begin position="5045"/>
        <end position="5103"/>
    </location>
</feature>
<feature type="domain" description="FIVAR 24">
    <location>
        <begin position="5171"/>
        <end position="5229"/>
    </location>
</feature>
<feature type="domain" description="FIVAR 25">
    <location>
        <begin position="5297"/>
        <end position="5355"/>
    </location>
</feature>
<feature type="domain" description="FIVAR 26">
    <location>
        <begin position="5423"/>
        <end position="5481"/>
    </location>
</feature>
<feature type="domain" description="FIVAR 27">
    <location>
        <begin position="5549"/>
        <end position="5607"/>
    </location>
</feature>
<feature type="domain" description="FIVAR 28">
    <location>
        <begin position="5675"/>
        <end position="5733"/>
    </location>
</feature>
<feature type="domain" description="FIVAR 29">
    <location>
        <begin position="5801"/>
        <end position="5859"/>
    </location>
</feature>
<feature type="domain" description="FIVAR 30">
    <location>
        <begin position="5927"/>
        <end position="5985"/>
    </location>
</feature>
<feature type="domain" description="FIVAR 31">
    <location>
        <begin position="6053"/>
        <end position="6111"/>
    </location>
</feature>
<feature type="domain" description="FIVAR 32">
    <location>
        <begin position="6179"/>
        <end position="6236"/>
    </location>
</feature>
<feature type="domain" description="FIVAR 33">
    <location>
        <begin position="6304"/>
        <end position="6362"/>
    </location>
</feature>
<feature type="domain" description="FIVAR 34">
    <location>
        <begin position="6430"/>
        <end position="6488"/>
    </location>
</feature>
<feature type="domain" description="FIVAR 35">
    <location>
        <begin position="6556"/>
        <end position="6614"/>
    </location>
</feature>
<feature type="domain" description="FIVAR 36">
    <location>
        <begin position="6682"/>
        <end position="6740"/>
    </location>
</feature>
<feature type="domain" description="FIVAR 37">
    <location>
        <begin position="6818"/>
        <end position="6866"/>
    </location>
</feature>
<feature type="domain" description="FIVAR 38">
    <location>
        <begin position="6934"/>
        <end position="6992"/>
    </location>
</feature>
<feature type="domain" description="FIVAR 39">
    <location>
        <begin position="7060"/>
        <end position="7118"/>
    </location>
</feature>
<feature type="domain" description="FIVAR 40">
    <location>
        <begin position="7186"/>
        <end position="7244"/>
    </location>
</feature>
<feature type="domain" description="FIVAR 41">
    <location>
        <begin position="7312"/>
        <end position="7370"/>
    </location>
</feature>
<feature type="domain" description="FIVAR 42">
    <location>
        <begin position="7438"/>
        <end position="7496"/>
    </location>
</feature>
<feature type="domain" description="FIVAR 43">
    <location>
        <begin position="7564"/>
        <end position="7622"/>
    </location>
</feature>
<feature type="domain" description="FIVAR 44">
    <location>
        <begin position="7690"/>
        <end position="7748"/>
    </location>
</feature>
<feature type="domain" description="FIVAR 45">
    <location>
        <begin position="7816"/>
        <end position="7874"/>
    </location>
</feature>
<feature type="domain" description="FIVAR 46">
    <location>
        <begin position="7942"/>
        <end position="8000"/>
    </location>
</feature>
<feature type="domain" description="FIVAR 47">
    <location>
        <begin position="8068"/>
        <end position="8129"/>
    </location>
</feature>
<feature type="domain" description="FIVAR 48">
    <location>
        <begin position="8194"/>
        <end position="8252"/>
    </location>
</feature>
<feature type="domain" description="FIVAR 49">
    <location>
        <begin position="8320"/>
        <end position="8378"/>
    </location>
</feature>
<feature type="domain" description="FIVAR 50">
    <location>
        <begin position="8446"/>
        <end position="8503"/>
    </location>
</feature>
<feature type="domain" description="FIVAR 51">
    <location>
        <begin position="8571"/>
        <end position="8629"/>
    </location>
</feature>
<feature type="domain" description="FIVAR 52">
    <location>
        <begin position="8697"/>
        <end position="8755"/>
    </location>
</feature>
<feature type="domain" description="FIVAR 53">
    <location>
        <begin position="8823"/>
        <end position="8881"/>
    </location>
</feature>
<feature type="domain" description="FIVAR 54">
    <location>
        <begin position="8949"/>
        <end position="9007"/>
    </location>
</feature>
<feature type="domain" description="FIVAR 55">
    <location>
        <begin position="9075"/>
        <end position="9129"/>
    </location>
</feature>
<feature type="domain" description="FIVAR 56">
    <location>
        <begin position="9197"/>
        <end position="9256"/>
    </location>
</feature>
<feature type="domain" description="FIVAR 57">
    <location>
        <begin position="9451"/>
        <end position="9507"/>
    </location>
</feature>
<feature type="region of interest" description="Disordered" evidence="2">
    <location>
        <begin position="41"/>
        <end position="86"/>
    </location>
</feature>
<feature type="region of interest" description="Disordered" evidence="2">
    <location>
        <begin position="99"/>
        <end position="152"/>
    </location>
</feature>
<feature type="region of interest" description="Disordered" evidence="2">
    <location>
        <begin position="250"/>
        <end position="277"/>
    </location>
</feature>
<feature type="region of interest" description="Disordered" evidence="2">
    <location>
        <begin position="1342"/>
        <end position="1373"/>
    </location>
</feature>
<feature type="region of interest" description="Disordered" evidence="2">
    <location>
        <begin position="2418"/>
        <end position="2438"/>
    </location>
</feature>
<feature type="region of interest" description="Disordered" evidence="2">
    <location>
        <begin position="10401"/>
        <end position="10498"/>
    </location>
</feature>
<feature type="compositionally biased region" description="Polar residues" evidence="2">
    <location>
        <begin position="41"/>
        <end position="59"/>
    </location>
</feature>
<feature type="compositionally biased region" description="Low complexity" evidence="2">
    <location>
        <begin position="65"/>
        <end position="80"/>
    </location>
</feature>
<feature type="compositionally biased region" description="Polar residues" evidence="2">
    <location>
        <begin position="99"/>
        <end position="117"/>
    </location>
</feature>
<feature type="compositionally biased region" description="Basic and acidic residues" evidence="2">
    <location>
        <begin position="130"/>
        <end position="140"/>
    </location>
</feature>
<feature type="compositionally biased region" description="Polar residues" evidence="2">
    <location>
        <begin position="141"/>
        <end position="151"/>
    </location>
</feature>
<feature type="compositionally biased region" description="Polar residues" evidence="2">
    <location>
        <begin position="250"/>
        <end position="266"/>
    </location>
</feature>
<feature type="compositionally biased region" description="Polar residues" evidence="2">
    <location>
        <begin position="1360"/>
        <end position="1373"/>
    </location>
</feature>
<feature type="compositionally biased region" description="Polar residues" evidence="2">
    <location>
        <begin position="2427"/>
        <end position="2438"/>
    </location>
</feature>
<feature type="compositionally biased region" description="Basic and acidic residues" evidence="2">
    <location>
        <begin position="10416"/>
        <end position="10426"/>
    </location>
</feature>
<feature type="compositionally biased region" description="Basic and acidic residues" evidence="2">
    <location>
        <begin position="10465"/>
        <end position="10475"/>
    </location>
</feature>
<feature type="compositionally biased region" description="Basic residues" evidence="2">
    <location>
        <begin position="10480"/>
        <end position="10498"/>
    </location>
</feature>
<evidence type="ECO:0000255" key="1"/>
<evidence type="ECO:0000256" key="2">
    <source>
        <dbReference type="SAM" id="MobiDB-lite"/>
    </source>
</evidence>
<evidence type="ECO:0000305" key="3"/>
<organism>
    <name type="scientific">Staphylococcus aureus (strain COL)</name>
    <dbReference type="NCBI Taxonomy" id="93062"/>
    <lineage>
        <taxon>Bacteria</taxon>
        <taxon>Bacillati</taxon>
        <taxon>Bacillota</taxon>
        <taxon>Bacilli</taxon>
        <taxon>Bacillales</taxon>
        <taxon>Staphylococcaceae</taxon>
        <taxon>Staphylococcus</taxon>
    </lineage>
</organism>
<gene>
    <name type="primary">ebh</name>
    <name type="ordered locus">SACOL1472</name>
</gene>
<proteinExistence type="inferred from homology"/>
<keyword id="KW-1003">Cell membrane</keyword>
<keyword id="KW-0472">Membrane</keyword>
<keyword id="KW-0677">Repeat</keyword>
<keyword id="KW-0732">Signal</keyword>
<keyword id="KW-0812">Transmembrane</keyword>
<keyword id="KW-1133">Transmembrane helix</keyword>
<name>EBH_STAAC</name>
<dbReference type="EMBL" id="CP000046">
    <property type="protein sequence ID" value="AAW37659.1"/>
    <property type="molecule type" value="Genomic_DNA"/>
</dbReference>
<dbReference type="RefSeq" id="WP_001109333.1">
    <property type="nucleotide sequence ID" value="NC_002951.2"/>
</dbReference>
<dbReference type="SMR" id="Q5HFY8"/>
<dbReference type="KEGG" id="sac:SACOL1472"/>
<dbReference type="HOGENOM" id="CLU_222673_0_0_9"/>
<dbReference type="Proteomes" id="UP000000530">
    <property type="component" value="Chromosome"/>
</dbReference>
<dbReference type="GO" id="GO:0005886">
    <property type="term" value="C:plasma membrane"/>
    <property type="evidence" value="ECO:0007669"/>
    <property type="project" value="UniProtKB-SubCell"/>
</dbReference>
<dbReference type="Gene3D" id="3.10.20.890">
    <property type="match status" value="1"/>
</dbReference>
<dbReference type="Gene3D" id="1.20.120.1850">
    <property type="entry name" value="Ebh helix bundles repeating unit (S and A modules)"/>
    <property type="match status" value="8"/>
</dbReference>
<dbReference type="Gene3D" id="1.20.5.420">
    <property type="entry name" value="Immunoglobulin FC, subunit C"/>
    <property type="match status" value="88"/>
</dbReference>
<dbReference type="InterPro" id="IPR011439">
    <property type="entry name" value="DUF1542"/>
</dbReference>
<dbReference type="InterPro" id="IPR026361">
    <property type="entry name" value="Ebh_dom"/>
</dbReference>
<dbReference type="InterPro" id="IPR051197">
    <property type="entry name" value="ECM-binding_protein"/>
</dbReference>
<dbReference type="InterPro" id="IPR020840">
    <property type="entry name" value="Extracell_matrix-bd_GA"/>
</dbReference>
<dbReference type="InterPro" id="IPR002988">
    <property type="entry name" value="GA_module"/>
</dbReference>
<dbReference type="InterPro" id="IPR009063">
    <property type="entry name" value="Ig/albumin-bd_sf"/>
</dbReference>
<dbReference type="InterPro" id="IPR005877">
    <property type="entry name" value="YSIRK_signal_dom"/>
</dbReference>
<dbReference type="NCBIfam" id="TIGR04264">
    <property type="entry name" value="hyperosmo_Ebh"/>
    <property type="match status" value="1"/>
</dbReference>
<dbReference type="NCBIfam" id="TIGR01168">
    <property type="entry name" value="YSIRK_signal"/>
    <property type="match status" value="1"/>
</dbReference>
<dbReference type="PANTHER" id="PTHR33150">
    <property type="entry name" value="EXTRACELLULAR MATRIX-BINDING PROTEIN EBH"/>
    <property type="match status" value="1"/>
</dbReference>
<dbReference type="PANTHER" id="PTHR33150:SF1">
    <property type="entry name" value="EXTRACELLULAR MATRIX-BINDING PROTEIN EBH"/>
    <property type="match status" value="1"/>
</dbReference>
<dbReference type="Pfam" id="PF07564">
    <property type="entry name" value="DUF1542"/>
    <property type="match status" value="8"/>
</dbReference>
<dbReference type="Pfam" id="PF07554">
    <property type="entry name" value="FIVAR"/>
    <property type="match status" value="51"/>
</dbReference>
<dbReference type="Pfam" id="PF01468">
    <property type="entry name" value="GA"/>
    <property type="match status" value="11"/>
</dbReference>
<dbReference type="Pfam" id="PF04650">
    <property type="entry name" value="YSIRK_signal"/>
    <property type="match status" value="1"/>
</dbReference>
<dbReference type="SMART" id="SM00844">
    <property type="entry name" value="GA"/>
    <property type="match status" value="52"/>
</dbReference>
<dbReference type="SUPFAM" id="SSF46997">
    <property type="entry name" value="Bacterial immunoglobulin/albumin-binding domains"/>
    <property type="match status" value="101"/>
</dbReference>
<protein>
    <recommendedName>
        <fullName>Extracellular matrix-binding protein ebh</fullName>
    </recommendedName>
    <alternativeName>
        <fullName>ECM-binding protein homolog</fullName>
    </alternativeName>
</protein>
<reference key="1">
    <citation type="journal article" date="2005" name="J. Bacteriol.">
        <title>Insights on evolution of virulence and resistance from the complete genome analysis of an early methicillin-resistant Staphylococcus aureus strain and a biofilm-producing methicillin-resistant Staphylococcus epidermidis strain.</title>
        <authorList>
            <person name="Gill S.R."/>
            <person name="Fouts D.E."/>
            <person name="Archer G.L."/>
            <person name="Mongodin E.F."/>
            <person name="DeBoy R.T."/>
            <person name="Ravel J."/>
            <person name="Paulsen I.T."/>
            <person name="Kolonay J.F."/>
            <person name="Brinkac L.M."/>
            <person name="Beanan M.J."/>
            <person name="Dodson R.J."/>
            <person name="Daugherty S.C."/>
            <person name="Madupu R."/>
            <person name="Angiuoli S.V."/>
            <person name="Durkin A.S."/>
            <person name="Haft D.H."/>
            <person name="Vamathevan J.J."/>
            <person name="Khouri H."/>
            <person name="Utterback T.R."/>
            <person name="Lee C."/>
            <person name="Dimitrov G."/>
            <person name="Jiang L."/>
            <person name="Qin H."/>
            <person name="Weidman J."/>
            <person name="Tran K."/>
            <person name="Kang K.H."/>
            <person name="Hance I.R."/>
            <person name="Nelson K.E."/>
            <person name="Fraser C.M."/>
        </authorList>
    </citation>
    <scope>NUCLEOTIDE SEQUENCE [LARGE SCALE GENOMIC DNA]</scope>
    <source>
        <strain>COL</strain>
    </source>
</reference>
<comment type="subcellular location">
    <subcellularLocation>
        <location evidence="3">Cell membrane</location>
        <topology evidence="3">Single-pass membrane protein</topology>
    </subcellularLocation>
</comment>